<keyword id="KW-0413">Isomerase</keyword>
<keyword id="KW-0423">Lactose metabolism</keyword>
<evidence type="ECO:0000255" key="1">
    <source>
        <dbReference type="HAMAP-Rule" id="MF_01555"/>
    </source>
</evidence>
<sequence>MTIFIGSDVAGQRLKDVVKTFLKENNHDVVDVTEGKELDFVDSTLAVVHEVQKNDDNLGIAVDAYGAGSFIVATKVKGMIAAEVSDERSAYMTRSHNNACMITMGSEIVGDTLAKNIAKEFVNGHYDGGRHQIRVDMLNKMC</sequence>
<protein>
    <recommendedName>
        <fullName evidence="1">Galactose-6-phosphate isomerase subunit LacA</fullName>
        <ecNumber evidence="1">5.3.1.26</ecNumber>
    </recommendedName>
</protein>
<accession>Q4L874</accession>
<gene>
    <name evidence="1" type="primary">lacA</name>
    <name type="ordered locus">SH0842</name>
</gene>
<proteinExistence type="inferred from homology"/>
<feature type="chain" id="PRO_0000208114" description="Galactose-6-phosphate isomerase subunit LacA">
    <location>
        <begin position="1"/>
        <end position="142"/>
    </location>
</feature>
<dbReference type="EC" id="5.3.1.26" evidence="1"/>
<dbReference type="EMBL" id="AP006716">
    <property type="protein sequence ID" value="BAE04151.1"/>
    <property type="molecule type" value="Genomic_DNA"/>
</dbReference>
<dbReference type="RefSeq" id="WP_011275155.1">
    <property type="nucleotide sequence ID" value="NC_007168.1"/>
</dbReference>
<dbReference type="SMR" id="Q4L874"/>
<dbReference type="KEGG" id="sha:SH0842"/>
<dbReference type="eggNOG" id="COG0698">
    <property type="taxonomic scope" value="Bacteria"/>
</dbReference>
<dbReference type="HOGENOM" id="CLU_091396_4_2_9"/>
<dbReference type="OrthoDB" id="1778624at2"/>
<dbReference type="UniPathway" id="UPA00702">
    <property type="reaction ID" value="UER00714"/>
</dbReference>
<dbReference type="Proteomes" id="UP000000543">
    <property type="component" value="Chromosome"/>
</dbReference>
<dbReference type="GO" id="GO:0050044">
    <property type="term" value="F:galactose-6-phosphate isomerase activity"/>
    <property type="evidence" value="ECO:0007669"/>
    <property type="project" value="UniProtKB-UniRule"/>
</dbReference>
<dbReference type="GO" id="GO:0004751">
    <property type="term" value="F:ribose-5-phosphate isomerase activity"/>
    <property type="evidence" value="ECO:0007669"/>
    <property type="project" value="TreeGrafter"/>
</dbReference>
<dbReference type="GO" id="GO:0019316">
    <property type="term" value="P:D-allose catabolic process"/>
    <property type="evidence" value="ECO:0007669"/>
    <property type="project" value="TreeGrafter"/>
</dbReference>
<dbReference type="GO" id="GO:0019388">
    <property type="term" value="P:galactose catabolic process"/>
    <property type="evidence" value="ECO:0007669"/>
    <property type="project" value="UniProtKB-UniPathway"/>
</dbReference>
<dbReference type="GO" id="GO:0019512">
    <property type="term" value="P:lactose catabolic process via tagatose-6-phosphate"/>
    <property type="evidence" value="ECO:0007669"/>
    <property type="project" value="UniProtKB-UniRule"/>
</dbReference>
<dbReference type="GO" id="GO:0009052">
    <property type="term" value="P:pentose-phosphate shunt, non-oxidative branch"/>
    <property type="evidence" value="ECO:0007669"/>
    <property type="project" value="TreeGrafter"/>
</dbReference>
<dbReference type="Gene3D" id="3.40.1400.10">
    <property type="entry name" value="Sugar-phosphate isomerase, RpiB/LacA/LacB"/>
    <property type="match status" value="1"/>
</dbReference>
<dbReference type="HAMAP" id="MF_01555">
    <property type="entry name" value="LacA"/>
    <property type="match status" value="1"/>
</dbReference>
<dbReference type="InterPro" id="IPR004783">
    <property type="entry name" value="LacA"/>
</dbReference>
<dbReference type="InterPro" id="IPR003500">
    <property type="entry name" value="RpiB_LacA_LacB"/>
</dbReference>
<dbReference type="InterPro" id="IPR036569">
    <property type="entry name" value="RpiB_LacA_LacB_sf"/>
</dbReference>
<dbReference type="NCBIfam" id="TIGR01118">
    <property type="entry name" value="lacA"/>
    <property type="match status" value="1"/>
</dbReference>
<dbReference type="NCBIfam" id="NF006380">
    <property type="entry name" value="PRK08621.1"/>
    <property type="match status" value="1"/>
</dbReference>
<dbReference type="NCBIfam" id="TIGR00689">
    <property type="entry name" value="rpiB_lacA_lacB"/>
    <property type="match status" value="1"/>
</dbReference>
<dbReference type="PANTHER" id="PTHR30345:SF5">
    <property type="entry name" value="GALACTOSE-6-PHOSPHATE ISOMERASE SUBUNIT LACA"/>
    <property type="match status" value="1"/>
</dbReference>
<dbReference type="PANTHER" id="PTHR30345">
    <property type="entry name" value="RIBOSE-5-PHOSPHATE ISOMERASE B"/>
    <property type="match status" value="1"/>
</dbReference>
<dbReference type="Pfam" id="PF02502">
    <property type="entry name" value="LacAB_rpiB"/>
    <property type="match status" value="1"/>
</dbReference>
<dbReference type="PIRSF" id="PIRSF005384">
    <property type="entry name" value="RpiB_LacA_B"/>
    <property type="match status" value="1"/>
</dbReference>
<dbReference type="SUPFAM" id="SSF89623">
    <property type="entry name" value="Ribose/Galactose isomerase RpiB/AlsB"/>
    <property type="match status" value="1"/>
</dbReference>
<reference key="1">
    <citation type="journal article" date="2005" name="J. Bacteriol.">
        <title>Whole-genome sequencing of Staphylococcus haemolyticus uncovers the extreme plasticity of its genome and the evolution of human-colonizing staphylococcal species.</title>
        <authorList>
            <person name="Takeuchi F."/>
            <person name="Watanabe S."/>
            <person name="Baba T."/>
            <person name="Yuzawa H."/>
            <person name="Ito T."/>
            <person name="Morimoto Y."/>
            <person name="Kuroda M."/>
            <person name="Cui L."/>
            <person name="Takahashi M."/>
            <person name="Ankai A."/>
            <person name="Baba S."/>
            <person name="Fukui S."/>
            <person name="Lee J.C."/>
            <person name="Hiramatsu K."/>
        </authorList>
    </citation>
    <scope>NUCLEOTIDE SEQUENCE [LARGE SCALE GENOMIC DNA]</scope>
    <source>
        <strain>JCSC1435</strain>
    </source>
</reference>
<name>LACA_STAHJ</name>
<organism>
    <name type="scientific">Staphylococcus haemolyticus (strain JCSC1435)</name>
    <dbReference type="NCBI Taxonomy" id="279808"/>
    <lineage>
        <taxon>Bacteria</taxon>
        <taxon>Bacillati</taxon>
        <taxon>Bacillota</taxon>
        <taxon>Bacilli</taxon>
        <taxon>Bacillales</taxon>
        <taxon>Staphylococcaceae</taxon>
        <taxon>Staphylococcus</taxon>
    </lineage>
</organism>
<comment type="catalytic activity">
    <reaction evidence="1">
        <text>aldehydo-D-galactose 6-phosphate = keto-D-tagatose 6-phosphate</text>
        <dbReference type="Rhea" id="RHEA:13033"/>
        <dbReference type="ChEBI" id="CHEBI:58255"/>
        <dbReference type="ChEBI" id="CHEBI:134283"/>
        <dbReference type="EC" id="5.3.1.26"/>
    </reaction>
</comment>
<comment type="pathway">
    <text evidence="1">Carbohydrate metabolism; D-galactose 6-phosphate degradation; D-tagatose 6-phosphate from D-galactose 6-phosphate: step 1/1.</text>
</comment>
<comment type="subunit">
    <text evidence="1">Heteromultimeric protein consisting of LacA and LacB.</text>
</comment>
<comment type="similarity">
    <text evidence="1">Belongs to the LacAB/RpiB family.</text>
</comment>